<protein>
    <recommendedName>
        <fullName evidence="6 7 8">Subtilisin-like serine protease</fullName>
        <ecNumber evidence="4">3.4.21.62</ecNumber>
    </recommendedName>
    <alternativeName>
        <fullName evidence="6 7">Tk-SP</fullName>
    </alternativeName>
</protein>
<sequence>MKKFGAVVLALFLVGLMAGSVLAAPQKPAVRNVSQQKNYGLLTPGLFKKVQRMSWDQEVSTIIMFDNQADKEKAVEILDFLGAKIKYNYHIIPALAVKIKVKDLLIIAGLMDTGYFGNAQLSGVQFIQEDYVVKVAVETEGLDESAAQVMATNMWNLGYDGSGITIGIIDTGIDASHPDLQGKVIGWVDFVNGKTTPYDDNGHGTHVASIAAGTGAASNGKYKGMAPGAKLVGIKVLNGQGSGSISDIINGVDWAVQNKDKYGIKVINLSLGSSQSSDGTDSLSQAVNNAWDAGLVVVVAAGNSGPNKYTVGSPAAASKVITVGAVDKYDVITDFSSRGPTADNRLKPEVVAPGNWIIAARASGTSMGQPINDYYTAAPGTSMATPHVAGIAALLLQAHPSWTPDKVKTALIETADIVKPDEIADIAYGAGRVNAYKAAYYDNYAKLTFTGYVSNKGSQSHQFTISGAGFVTATLYWDNSGSDLDLYLYDPNGNQVDYSYTAYYGFEKVGYYNPTAGTWTIKVVSYSGSANYQVDVVSDGSLGQPSGGGSEPSPSPSPEPTVDEKTFTGTVHDYYDKSDTFTMTVNSGATKITGDLYFDTSYHDLDLYLYDPNQNLVDRSESSNSYEHVEYNNPAPGTWYFLVYAYDTYGYADYQLDAKVYYG</sequence>
<organism evidence="10">
    <name type="scientific">Thermococcus kodakarensis (strain ATCC BAA-918 / JCM 12380 / KOD1)</name>
    <name type="common">Pyrococcus kodakaraensis (strain KOD1)</name>
    <dbReference type="NCBI Taxonomy" id="69014"/>
    <lineage>
        <taxon>Archaea</taxon>
        <taxon>Methanobacteriati</taxon>
        <taxon>Methanobacteriota</taxon>
        <taxon>Thermococci</taxon>
        <taxon>Thermococcales</taxon>
        <taxon>Thermococcaceae</taxon>
        <taxon>Thermococcus</taxon>
    </lineage>
</organism>
<keyword id="KW-0002">3D-structure</keyword>
<keyword id="KW-0106">Calcium</keyword>
<keyword id="KW-0903">Direct protein sequencing</keyword>
<keyword id="KW-0378">Hydrolase</keyword>
<keyword id="KW-0479">Metal-binding</keyword>
<keyword id="KW-0645">Protease</keyword>
<keyword id="KW-1185">Reference proteome</keyword>
<keyword id="KW-0720">Serine protease</keyword>
<keyword id="KW-0732">Signal</keyword>
<reference evidence="8 10" key="1">
    <citation type="journal article" date="2005" name="Genome Res.">
        <title>Complete genome sequence of the hyperthermophilic archaeon Thermococcus kodakaraensis KOD1 and comparison with Pyrococcus genomes.</title>
        <authorList>
            <person name="Fukui T."/>
            <person name="Atomi H."/>
            <person name="Kanai T."/>
            <person name="Matsumi R."/>
            <person name="Fujiwara S."/>
            <person name="Imanaka T."/>
        </authorList>
    </citation>
    <scope>NUCLEOTIDE SEQUENCE [LARGE SCALE GENOMIC DNA]</scope>
    <source>
        <strain evidence="10">ATCC BAA-918 / JCM 12380 / KOD1</strain>
    </source>
</reference>
<reference key="2">
    <citation type="journal article" date="2010" name="Protein Eng. Des. Sel.">
        <title>Subtilisin-like serine protease from hyperthermophilic archaeon Thermococcus kodakaraensis with N- and C-terminal propeptides.</title>
        <authorList>
            <person name="Foophow T."/>
            <person name="Tanaka S."/>
            <person name="Koga Y."/>
            <person name="Takano K."/>
            <person name="Kanaya S."/>
        </authorList>
    </citation>
    <scope>PROTEIN SEQUENCE OF 24-26 AND 137-140</scope>
    <scope>FUNCTION</scope>
    <scope>CATALYTIC ACTIVITY</scope>
    <scope>ACTIVITY REGULATION</scope>
    <scope>BIOPHYSICOCHEMICAL PROPERTIES</scope>
    <scope>SUBUNIT</scope>
    <scope>MASS SPECTROMETRY</scope>
    <scope>BIOTECHNOLOGY</scope>
    <scope>MUTAGENESIS OF SER-382</scope>
    <scope>MAGNETIC CIRCULAR DICHROISM</scope>
</reference>
<reference evidence="9" key="3">
    <citation type="journal article" date="2010" name="J. Mol. Biol.">
        <title>Crystal structure of a subtilisin homologue, Tk-SP, from Thermococcus kodakaraensis: requirement of a C-terminal beta-jelly roll domain for hyperstability.</title>
        <authorList>
            <person name="Foophow T."/>
            <person name="Tanaka S."/>
            <person name="Angkawidjaja C."/>
            <person name="Koga Y."/>
            <person name="Takano K."/>
            <person name="Kanaya S."/>
        </authorList>
    </citation>
    <scope>X-RAY CRYSTALLOGRAPHY (2.00 ANGSTROMS) OF 24-562 OF MUTANT ALA-382 IN COMPLEX WITH CALCIUM</scope>
    <scope>CATALYTIC ACTIVITY</scope>
    <scope>SUBUNIT</scope>
    <scope>DOMAIN</scope>
    <scope>PRO-PEPTIDES</scope>
    <scope>ACTIVE SITE</scope>
    <scope>MUTAGENESIS OF SER-382</scope>
    <scope>CIRCULAR DICHROISM</scope>
</reference>
<gene>
    <name evidence="8" type="ordered locus">TK1689</name>
</gene>
<dbReference type="EC" id="3.4.21.62" evidence="4"/>
<dbReference type="EMBL" id="AP006878">
    <property type="protein sequence ID" value="BAD85878.1"/>
    <property type="molecule type" value="Genomic_DNA"/>
</dbReference>
<dbReference type="RefSeq" id="WP_011250640.1">
    <property type="nucleotide sequence ID" value="NC_006624.1"/>
</dbReference>
<dbReference type="PDB" id="3AFG">
    <property type="method" value="X-ray"/>
    <property type="resolution" value="2.00 A"/>
    <property type="chains" value="A/B=24-562"/>
</dbReference>
<dbReference type="PDBsum" id="3AFG"/>
<dbReference type="SMR" id="Q5JIZ5"/>
<dbReference type="STRING" id="69014.TK1689"/>
<dbReference type="EnsemblBacteria" id="BAD85878">
    <property type="protein sequence ID" value="BAD85878"/>
    <property type="gene ID" value="TK1689"/>
</dbReference>
<dbReference type="GeneID" id="78448218"/>
<dbReference type="KEGG" id="tko:TK1689"/>
<dbReference type="PATRIC" id="fig|69014.16.peg.1647"/>
<dbReference type="eggNOG" id="arCOG00702">
    <property type="taxonomic scope" value="Archaea"/>
</dbReference>
<dbReference type="HOGENOM" id="CLU_011263_15_5_2"/>
<dbReference type="InParanoid" id="Q5JIZ5"/>
<dbReference type="OrthoDB" id="341609at2157"/>
<dbReference type="PhylomeDB" id="Q5JIZ5"/>
<dbReference type="BRENDA" id="3.4.21.62">
    <property type="organism ID" value="5246"/>
</dbReference>
<dbReference type="EvolutionaryTrace" id="Q5JIZ5"/>
<dbReference type="Proteomes" id="UP000000536">
    <property type="component" value="Chromosome"/>
</dbReference>
<dbReference type="GO" id="GO:0005509">
    <property type="term" value="F:calcium ion binding"/>
    <property type="evidence" value="ECO:0000314"/>
    <property type="project" value="UniProtKB"/>
</dbReference>
<dbReference type="GO" id="GO:0008233">
    <property type="term" value="F:peptidase activity"/>
    <property type="evidence" value="ECO:0000314"/>
    <property type="project" value="UniProtKB"/>
</dbReference>
<dbReference type="GO" id="GO:0004252">
    <property type="term" value="F:serine-type endopeptidase activity"/>
    <property type="evidence" value="ECO:0000314"/>
    <property type="project" value="UniProtKB"/>
</dbReference>
<dbReference type="GO" id="GO:0006508">
    <property type="term" value="P:proteolysis"/>
    <property type="evidence" value="ECO:0000314"/>
    <property type="project" value="UniProtKB"/>
</dbReference>
<dbReference type="CDD" id="cd07487">
    <property type="entry name" value="Peptidases_S8_1"/>
    <property type="match status" value="1"/>
</dbReference>
<dbReference type="FunFam" id="2.60.120.380:FF:000025">
    <property type="entry name" value="Subtilisin-like serine protease"/>
    <property type="match status" value="2"/>
</dbReference>
<dbReference type="FunFam" id="3.40.50.200:FF:000029">
    <property type="entry name" value="Subtilisin-like serine protease"/>
    <property type="match status" value="1"/>
</dbReference>
<dbReference type="Gene3D" id="2.60.120.380">
    <property type="match status" value="2"/>
</dbReference>
<dbReference type="Gene3D" id="3.30.70.80">
    <property type="entry name" value="Peptidase S8 propeptide/proteinase inhibitor I9"/>
    <property type="match status" value="1"/>
</dbReference>
<dbReference type="Gene3D" id="3.40.50.200">
    <property type="entry name" value="Peptidase S8/S53 domain"/>
    <property type="match status" value="1"/>
</dbReference>
<dbReference type="InterPro" id="IPR008979">
    <property type="entry name" value="Galactose-bd-like_sf"/>
</dbReference>
<dbReference type="InterPro" id="IPR007280">
    <property type="entry name" value="Peptidase_C_arc/bac"/>
</dbReference>
<dbReference type="InterPro" id="IPR000209">
    <property type="entry name" value="Peptidase_S8/S53_dom"/>
</dbReference>
<dbReference type="InterPro" id="IPR036852">
    <property type="entry name" value="Peptidase_S8/S53_dom_sf"/>
</dbReference>
<dbReference type="InterPro" id="IPR023827">
    <property type="entry name" value="Peptidase_S8_Asp-AS"/>
</dbReference>
<dbReference type="InterPro" id="IPR022398">
    <property type="entry name" value="Peptidase_S8_His-AS"/>
</dbReference>
<dbReference type="InterPro" id="IPR023828">
    <property type="entry name" value="Peptidase_S8_Ser-AS"/>
</dbReference>
<dbReference type="InterPro" id="IPR050131">
    <property type="entry name" value="Peptidase_S8_subtilisin-like"/>
</dbReference>
<dbReference type="InterPro" id="IPR015500">
    <property type="entry name" value="Peptidase_S8_subtilisin-rel"/>
</dbReference>
<dbReference type="InterPro" id="IPR037045">
    <property type="entry name" value="S8pro/Inhibitor_I9_sf"/>
</dbReference>
<dbReference type="InterPro" id="IPR017319">
    <property type="entry name" value="Subtilisin_TK1689"/>
</dbReference>
<dbReference type="InterPro" id="IPR041326">
    <property type="entry name" value="Tk-SP_N-pro"/>
</dbReference>
<dbReference type="PANTHER" id="PTHR43806">
    <property type="entry name" value="PEPTIDASE S8"/>
    <property type="match status" value="1"/>
</dbReference>
<dbReference type="PANTHER" id="PTHR43806:SF65">
    <property type="entry name" value="SERINE PROTEASE APRX"/>
    <property type="match status" value="1"/>
</dbReference>
<dbReference type="Pfam" id="PF00082">
    <property type="entry name" value="Peptidase_S8"/>
    <property type="match status" value="1"/>
</dbReference>
<dbReference type="Pfam" id="PF04151">
    <property type="entry name" value="PPC"/>
    <property type="match status" value="2"/>
</dbReference>
<dbReference type="Pfam" id="PF18237">
    <property type="entry name" value="Tk-SP_N-pro"/>
    <property type="match status" value="1"/>
</dbReference>
<dbReference type="PIRSF" id="PIRSF037907">
    <property type="entry name" value="Subtilisin_rel_TK1689"/>
    <property type="match status" value="1"/>
</dbReference>
<dbReference type="PRINTS" id="PR00723">
    <property type="entry name" value="SUBTILISIN"/>
</dbReference>
<dbReference type="SUPFAM" id="SSF49785">
    <property type="entry name" value="Galactose-binding domain-like"/>
    <property type="match status" value="1"/>
</dbReference>
<dbReference type="SUPFAM" id="SSF52743">
    <property type="entry name" value="Subtilisin-like"/>
    <property type="match status" value="1"/>
</dbReference>
<dbReference type="PROSITE" id="PS51892">
    <property type="entry name" value="SUBTILASE"/>
    <property type="match status" value="1"/>
</dbReference>
<dbReference type="PROSITE" id="PS00136">
    <property type="entry name" value="SUBTILASE_ASP"/>
    <property type="match status" value="1"/>
</dbReference>
<dbReference type="PROSITE" id="PS00137">
    <property type="entry name" value="SUBTILASE_HIS"/>
    <property type="match status" value="1"/>
</dbReference>
<dbReference type="PROSITE" id="PS00138">
    <property type="entry name" value="SUBTILASE_SER"/>
    <property type="match status" value="1"/>
</dbReference>
<proteinExistence type="evidence at protein level"/>
<accession>Q5JIZ5</accession>
<feature type="signal peptide" evidence="5">
    <location>
        <begin position="1"/>
        <end position="23"/>
    </location>
</feature>
<feature type="propeptide" id="PRO_0000431236" description="Removed in mature form" evidence="4 5">
    <location>
        <begin position="24"/>
        <end position="136"/>
    </location>
</feature>
<feature type="chain" id="PRO_0000431237" description="Subtilisin-like serine protease" evidence="4 5">
    <location>
        <begin position="137"/>
        <end position="562"/>
    </location>
</feature>
<feature type="propeptide" id="PRO_0000431238" description="Removed in mature form" evidence="4 5">
    <location>
        <begin position="563"/>
        <end position="663"/>
    </location>
</feature>
<feature type="domain" description="Peptidase S8" evidence="1">
    <location>
        <begin position="139"/>
        <end position="439"/>
    </location>
</feature>
<feature type="region of interest" description="Disordered" evidence="3">
    <location>
        <begin position="537"/>
        <end position="565"/>
    </location>
</feature>
<feature type="active site" description="Charge relay system" evidence="1 5">
    <location>
        <position position="170"/>
    </location>
</feature>
<feature type="active site" description="Charge relay system" evidence="1 5">
    <location>
        <position position="203"/>
    </location>
</feature>
<feature type="active site" description="Charge relay system" evidence="1 5">
    <location>
        <position position="382"/>
    </location>
</feature>
<feature type="binding site" evidence="5">
    <location>
        <position position="420"/>
    </location>
    <ligand>
        <name>Ca(2+)</name>
        <dbReference type="ChEBI" id="CHEBI:29108"/>
        <label>1</label>
    </ligand>
</feature>
<feature type="binding site" evidence="5">
    <location>
        <position position="423"/>
    </location>
    <ligand>
        <name>Ca(2+)</name>
        <dbReference type="ChEBI" id="CHEBI:29108"/>
        <label>1</label>
    </ligand>
</feature>
<feature type="binding site" evidence="5">
    <location>
        <position position="483"/>
    </location>
    <ligand>
        <name>Ca(2+)</name>
        <dbReference type="ChEBI" id="CHEBI:29108"/>
        <label>2</label>
    </ligand>
</feature>
<feature type="binding site" evidence="5">
    <location>
        <position position="484"/>
    </location>
    <ligand>
        <name>Ca(2+)</name>
        <dbReference type="ChEBI" id="CHEBI:29108"/>
        <label>2</label>
    </ligand>
</feature>
<feature type="binding site" evidence="5">
    <location>
        <position position="485"/>
    </location>
    <ligand>
        <name>Ca(2+)</name>
        <dbReference type="ChEBI" id="CHEBI:29108"/>
        <label>2</label>
    </ligand>
</feature>
<feature type="binding site" evidence="5">
    <location>
        <position position="497"/>
    </location>
    <ligand>
        <name>Ca(2+)</name>
        <dbReference type="ChEBI" id="CHEBI:29108"/>
        <label>1</label>
    </ligand>
</feature>
<feature type="binding site" evidence="5">
    <location>
        <position position="498"/>
    </location>
    <ligand>
        <name>Ca(2+)</name>
        <dbReference type="ChEBI" id="CHEBI:29108"/>
        <label>1</label>
    </ligand>
</feature>
<feature type="binding site" evidence="5">
    <location>
        <position position="501"/>
    </location>
    <ligand>
        <name>Ca(2+)</name>
        <dbReference type="ChEBI" id="CHEBI:29108"/>
        <label>2</label>
    </ligand>
</feature>
<feature type="binding site" evidence="5">
    <location>
        <position position="507"/>
    </location>
    <ligand>
        <name>Ca(2+)</name>
        <dbReference type="ChEBI" id="CHEBI:29108"/>
        <label>2</label>
    </ligand>
</feature>
<feature type="site" description="Important for catalytic activity" evidence="6">
    <location>
        <position position="303"/>
    </location>
</feature>
<feature type="mutagenesis site" description="Loss of activity. Greatly destabilized; when associated with the deletion of the calcium-binding form of the beta-jelly roll domain of the mature domain." evidence="5">
    <original>S</original>
    <variation>A</variation>
    <location>
        <position position="382"/>
    </location>
</feature>
<feature type="mutagenesis site" description="Greatly reduced enzymatic activity. Greatly reduced enzymatic activity; when associated with the deletion of the beta-jelly roll domain of the mature domain." evidence="5">
    <original>S</original>
    <variation>C</variation>
    <location>
        <position position="382"/>
    </location>
</feature>
<feature type="helix" evidence="11">
    <location>
        <begin position="44"/>
        <end position="51"/>
    </location>
</feature>
<feature type="strand" evidence="11">
    <location>
        <begin position="58"/>
        <end position="67"/>
    </location>
</feature>
<feature type="helix" evidence="11">
    <location>
        <begin position="68"/>
        <end position="81"/>
    </location>
</feature>
<feature type="strand" evidence="11">
    <location>
        <begin position="84"/>
        <end position="88"/>
    </location>
</feature>
<feature type="strand" evidence="11">
    <location>
        <begin position="90"/>
        <end position="100"/>
    </location>
</feature>
<feature type="helix" evidence="11">
    <location>
        <begin position="101"/>
        <end position="107"/>
    </location>
</feature>
<feature type="strand" evidence="11">
    <location>
        <begin position="124"/>
        <end position="129"/>
    </location>
</feature>
<feature type="strand" evidence="11">
    <location>
        <begin position="132"/>
        <end position="134"/>
    </location>
</feature>
<feature type="strand" evidence="11">
    <location>
        <begin position="165"/>
        <end position="172"/>
    </location>
</feature>
<feature type="helix" evidence="11">
    <location>
        <begin position="178"/>
        <end position="180"/>
    </location>
</feature>
<feature type="turn" evidence="11">
    <location>
        <begin position="181"/>
        <end position="183"/>
    </location>
</feature>
<feature type="strand" evidence="11">
    <location>
        <begin position="184"/>
        <end position="189"/>
    </location>
</feature>
<feature type="turn" evidence="11">
    <location>
        <begin position="190"/>
        <end position="192"/>
    </location>
</feature>
<feature type="strand" evidence="11">
    <location>
        <begin position="199"/>
        <end position="202"/>
    </location>
</feature>
<feature type="helix" evidence="11">
    <location>
        <begin position="203"/>
        <end position="212"/>
    </location>
</feature>
<feature type="helix" evidence="11">
    <location>
        <begin position="216"/>
        <end position="218"/>
    </location>
</feature>
<feature type="turn" evidence="11">
    <location>
        <begin position="219"/>
        <end position="222"/>
    </location>
</feature>
<feature type="strand" evidence="11">
    <location>
        <begin position="230"/>
        <end position="235"/>
    </location>
</feature>
<feature type="strand" evidence="11">
    <location>
        <begin position="241"/>
        <end position="244"/>
    </location>
</feature>
<feature type="helix" evidence="11">
    <location>
        <begin position="245"/>
        <end position="257"/>
    </location>
</feature>
<feature type="helix" evidence="11">
    <location>
        <begin position="259"/>
        <end position="262"/>
    </location>
</feature>
<feature type="strand" evidence="11">
    <location>
        <begin position="264"/>
        <end position="269"/>
    </location>
</feature>
<feature type="helix" evidence="11">
    <location>
        <begin position="282"/>
        <end position="292"/>
    </location>
</feature>
<feature type="strand" evidence="11">
    <location>
        <begin position="296"/>
        <end position="300"/>
    </location>
</feature>
<feature type="strand" evidence="11">
    <location>
        <begin position="306"/>
        <end position="309"/>
    </location>
</feature>
<feature type="turn" evidence="11">
    <location>
        <begin position="313"/>
        <end position="316"/>
    </location>
</feature>
<feature type="strand" evidence="11">
    <location>
        <begin position="318"/>
        <end position="326"/>
    </location>
</feature>
<feature type="strand" evidence="11">
    <location>
        <begin position="334"/>
        <end position="336"/>
    </location>
</feature>
<feature type="strand" evidence="11">
    <location>
        <begin position="349"/>
        <end position="353"/>
    </location>
</feature>
<feature type="strand" evidence="11">
    <location>
        <begin position="355"/>
        <end position="360"/>
    </location>
</feature>
<feature type="strand" evidence="11">
    <location>
        <begin position="368"/>
        <end position="370"/>
    </location>
</feature>
<feature type="strand" evidence="11">
    <location>
        <begin position="372"/>
        <end position="378"/>
    </location>
</feature>
<feature type="helix" evidence="11">
    <location>
        <begin position="381"/>
        <end position="398"/>
    </location>
</feature>
<feature type="helix" evidence="11">
    <location>
        <begin position="404"/>
        <end position="414"/>
    </location>
</feature>
<feature type="helix" evidence="11">
    <location>
        <begin position="420"/>
        <end position="422"/>
    </location>
</feature>
<feature type="turn" evidence="11">
    <location>
        <begin position="426"/>
        <end position="428"/>
    </location>
</feature>
<feature type="helix" evidence="11">
    <location>
        <begin position="435"/>
        <end position="439"/>
    </location>
</feature>
<feature type="helix" evidence="11">
    <location>
        <begin position="441"/>
        <end position="443"/>
    </location>
</feature>
<feature type="strand" evidence="11">
    <location>
        <begin position="444"/>
        <end position="453"/>
    </location>
</feature>
<feature type="strand" evidence="11">
    <location>
        <begin position="458"/>
        <end position="467"/>
    </location>
</feature>
<feature type="strand" evidence="11">
    <location>
        <begin position="469"/>
        <end position="478"/>
    </location>
</feature>
<feature type="strand" evidence="11">
    <location>
        <begin position="483"/>
        <end position="489"/>
    </location>
</feature>
<feature type="strand" evidence="11">
    <location>
        <begin position="495"/>
        <end position="499"/>
    </location>
</feature>
<feature type="strand" evidence="11">
    <location>
        <begin position="502"/>
        <end position="505"/>
    </location>
</feature>
<feature type="strand" evidence="11">
    <location>
        <begin position="507"/>
        <end position="513"/>
    </location>
</feature>
<feature type="strand" evidence="11">
    <location>
        <begin position="516"/>
        <end position="528"/>
    </location>
</feature>
<feature type="strand" evidence="11">
    <location>
        <begin position="530"/>
        <end position="543"/>
    </location>
</feature>
<evidence type="ECO:0000255" key="1">
    <source>
        <dbReference type="PROSITE-ProRule" id="PRU01240"/>
    </source>
</evidence>
<evidence type="ECO:0000255" key="2">
    <source>
        <dbReference type="RuleBase" id="RU003355"/>
    </source>
</evidence>
<evidence type="ECO:0000256" key="3">
    <source>
        <dbReference type="SAM" id="MobiDB-lite"/>
    </source>
</evidence>
<evidence type="ECO:0000269" key="4">
    <source>
    </source>
</evidence>
<evidence type="ECO:0000269" key="5">
    <source>
    </source>
</evidence>
<evidence type="ECO:0000303" key="6">
    <source>
    </source>
</evidence>
<evidence type="ECO:0000303" key="7">
    <source>
    </source>
</evidence>
<evidence type="ECO:0000312" key="8">
    <source>
        <dbReference type="EMBL" id="BAD85878.1"/>
    </source>
</evidence>
<evidence type="ECO:0000312" key="9">
    <source>
        <dbReference type="PDB" id="3AFG"/>
    </source>
</evidence>
<evidence type="ECO:0000312" key="10">
    <source>
        <dbReference type="Proteomes" id="UP000000536"/>
    </source>
</evidence>
<evidence type="ECO:0007829" key="11">
    <source>
        <dbReference type="PDB" id="3AFG"/>
    </source>
</evidence>
<name>TKSP_THEKO</name>
<comment type="function">
    <text evidence="4">Serine protease with a broad substrate specificity.</text>
</comment>
<comment type="catalytic activity">
    <reaction evidence="4">
        <text>Hydrolysis of proteins with broad specificity for peptide bonds, and a preference for a large uncharged residue in P1. Hydrolyzes peptide amides.</text>
        <dbReference type="EC" id="3.4.21.62"/>
    </reaction>
</comment>
<comment type="activity regulation">
    <text evidence="4">Resistant to treatment with 5% SDS, 8 M urea, 10% Triton X-100 or 10% Tween-20. Fully active although less stable in the presence of 10 mM EDTA. Activity not affected by the absence or presence of 10 mM CaCl(2). Unstable in the presence of 2 M or over GdnHCl and loses 35% and 99% of its activity upon incubation with 2 and 4 M GdnHCl, respectively, for 1 hour at 55 degrees Celsius. Nearly fully loses activity upon incubation at pH 2.0.</text>
</comment>
<comment type="biophysicochemical properties">
    <kinetics>
        <KM evidence="4">0.11 mM for N-succinyl-Ala-Ala-Pro-Phe-p-nitroanilide at 20 degrees Celsius and pH 7.5</KM>
        <KM evidence="4">0.41 mM for N-succinyl-Ala-Ala-Pro-Phe-p-nitroanilide at 80 degrees Celsius and pH 7.5</KM>
        <Vmax evidence="4">510.0 umol/min/mg enzyme</Vmax>
        <text evidence="4">kcat is 1.6 sec(-1) for N-succinyl-Ala-Ala-Pro-Phe-p-nitroanilide at 20 degrees Celsius and pH 7.5 (PubMed:20100702). kcat is 25 sec(-1) for N-succinyl-Ala-Ala-Pro-Phe-p-nitroanilide at 80 degrees Celsius and pH 7.5 (PubMed:20100702).</text>
    </kinetics>
    <phDependence>
        <text evidence="4">High activity at a wide pH range between 7.0-11.5 at 20 degrees Celsius and pH 7.5. It is not fully stable at pH 6 or under and at pH 12 or over. It loses over 85% of its activity at pH 3 or under and at pH 13.</text>
    </phDependence>
    <temperatureDependence>
        <text evidence="4">Optimum temperature is about 100 degrees Celsius. Highly thermostable. Stable at 80 degrees Celsius for at least 3 hours. Half-life at 100 degrees Celsius is 100 minutes and at 90 degrees Celsius more than 3 hours.</text>
    </temperatureDependence>
</comment>
<comment type="subunit">
    <text evidence="4 5">Monomer.</text>
</comment>
<comment type="domain">
    <text evidence="5">The C-terminal calcium-binding beta-jelly roll domain (445-562) of the mature domain is not required for folding or activity, but it is required for the hyperstabilization of the protein and possibly for its adaptation to high-temperature environment.</text>
</comment>
<comment type="mass spectrometry"/>
<comment type="biotechnology">
    <text evidence="6">Has potential for application in biotechnology fields due to its high resistance to heat, denaturants, detergents and chelating agents.</text>
</comment>
<comment type="similarity">
    <text evidence="2">Belongs to the peptidase S8 family.</text>
</comment>